<reference key="1">
    <citation type="journal article" date="2004" name="J. Mol. Microbiol. Biotechnol.">
        <title>The complete genome sequence of Bacillus licheniformis DSM13, an organism with great industrial potential.</title>
        <authorList>
            <person name="Veith B."/>
            <person name="Herzberg C."/>
            <person name="Steckel S."/>
            <person name="Feesche J."/>
            <person name="Maurer K.H."/>
            <person name="Ehrenreich P."/>
            <person name="Baeumer S."/>
            <person name="Henne A."/>
            <person name="Liesegang H."/>
            <person name="Merkl R."/>
            <person name="Ehrenreich A."/>
            <person name="Gottschalk G."/>
        </authorList>
    </citation>
    <scope>NUCLEOTIDE SEQUENCE [LARGE SCALE GENOMIC DNA]</scope>
    <source>
        <strain>ATCC 14580 / DSM 13 / JCM 2505 / CCUG 7422 / NBRC 12200 / NCIMB 9375 / NCTC 10341 / NRRL NRS-1264 / Gibson 46</strain>
    </source>
</reference>
<reference key="2">
    <citation type="journal article" date="2004" name="Genome Biol.">
        <title>Complete genome sequence of the industrial bacterium Bacillus licheniformis and comparisons with closely related Bacillus species.</title>
        <authorList>
            <person name="Rey M.W."/>
            <person name="Ramaiya P."/>
            <person name="Nelson B.A."/>
            <person name="Brody-Karpin S.D."/>
            <person name="Zaretsky E.J."/>
            <person name="Tang M."/>
            <person name="Lopez de Leon A."/>
            <person name="Xiang H."/>
            <person name="Gusti V."/>
            <person name="Clausen I.G."/>
            <person name="Olsen P.B."/>
            <person name="Rasmussen M.D."/>
            <person name="Andersen J.T."/>
            <person name="Joergensen P.L."/>
            <person name="Larsen T.S."/>
            <person name="Sorokin A."/>
            <person name="Bolotin A."/>
            <person name="Lapidus A."/>
            <person name="Galleron N."/>
            <person name="Ehrlich S.D."/>
            <person name="Berka R.M."/>
        </authorList>
    </citation>
    <scope>NUCLEOTIDE SEQUENCE [LARGE SCALE GENOMIC DNA]</scope>
    <source>
        <strain>ATCC 14580 / DSM 13 / JCM 2505 / CCUG 7422 / NBRC 12200 / NCIMB 9375 / NCTC 10341 / NRRL NRS-1264 / Gibson 46</strain>
    </source>
</reference>
<keyword id="KW-1003">Cell membrane</keyword>
<keyword id="KW-0472">Membrane</keyword>
<keyword id="KW-0479">Metal-binding</keyword>
<keyword id="KW-1185">Reference proteome</keyword>
<keyword id="KW-0813">Transport</keyword>
<keyword id="KW-0862">Zinc</keyword>
<accession>Q65MD5</accession>
<accession>Q62XS8</accession>
<name>DABA_BACLD</name>
<gene>
    <name evidence="1" type="primary">dabA</name>
    <name type="ordered locus">BLi00845</name>
    <name type="ordered locus">BL00917</name>
</gene>
<protein>
    <recommendedName>
        <fullName evidence="1">Probable inorganic carbon transporter subunit DabA</fullName>
    </recommendedName>
</protein>
<dbReference type="EMBL" id="CP000002">
    <property type="protein sequence ID" value="AAU22430.1"/>
    <property type="molecule type" value="Genomic_DNA"/>
</dbReference>
<dbReference type="EMBL" id="AE017333">
    <property type="protein sequence ID" value="AAU39779.1"/>
    <property type="molecule type" value="Genomic_DNA"/>
</dbReference>
<dbReference type="RefSeq" id="WP_011197665.1">
    <property type="nucleotide sequence ID" value="NC_006322.1"/>
</dbReference>
<dbReference type="SMR" id="Q65MD5"/>
<dbReference type="STRING" id="279010.BL00917"/>
<dbReference type="KEGG" id="bld:BLi00845"/>
<dbReference type="KEGG" id="bli:BL00917"/>
<dbReference type="PATRIC" id="fig|279010.13.peg.836"/>
<dbReference type="eggNOG" id="COG3002">
    <property type="taxonomic scope" value="Bacteria"/>
</dbReference>
<dbReference type="HOGENOM" id="CLU_009885_0_0_9"/>
<dbReference type="Proteomes" id="UP000000606">
    <property type="component" value="Chromosome"/>
</dbReference>
<dbReference type="GO" id="GO:0005886">
    <property type="term" value="C:plasma membrane"/>
    <property type="evidence" value="ECO:0007669"/>
    <property type="project" value="UniProtKB-SubCell"/>
</dbReference>
<dbReference type="GO" id="GO:0008270">
    <property type="term" value="F:zinc ion binding"/>
    <property type="evidence" value="ECO:0007669"/>
    <property type="project" value="UniProtKB-UniRule"/>
</dbReference>
<dbReference type="HAMAP" id="MF_01871">
    <property type="entry name" value="DabA"/>
    <property type="match status" value="1"/>
</dbReference>
<dbReference type="InterPro" id="IPR018752">
    <property type="entry name" value="DabA"/>
</dbReference>
<dbReference type="PANTHER" id="PTHR38344:SF1">
    <property type="entry name" value="INORGANIC CARBON TRANSPORTER SUBUNIT DABA-RELATED"/>
    <property type="match status" value="1"/>
</dbReference>
<dbReference type="PANTHER" id="PTHR38344">
    <property type="entry name" value="UPF0753 PROTEIN AQ_863"/>
    <property type="match status" value="1"/>
</dbReference>
<dbReference type="Pfam" id="PF10070">
    <property type="entry name" value="DabA"/>
    <property type="match status" value="1"/>
</dbReference>
<sequence length="873" mass="98656">MKAAPTLSKQLIFQYEHQTADFNMDELVQSAARVIAPLWPIETFAARHPWMGLEEQTFEQTARQLKQQLHVDIYPKSSIFRSAKQRGEIDETILEKKLINWLDSHQPGMQRETAEAFCKAALKLDEIPGQLLRSRQVKKLAKQAARGTIDGRKTSFIKPLSVFAGQKSAHLLDHHVIKWCKLFLDESQSAWRLPHREKGFYSAWRQLVEHDPALSRAERQRLNGWPEEPRDAMKKALRAFDISNADVQAYLEAHLLSLPGWAGMMLWRSQQSQDEEELLLEYLAVRLSMEWMLVEPYLPLPKPNPEKEMQLVPLIASWLHWGGLTPEEWLELSAAEQKARLTLARRFDDITRRRLWLEAWEQTYAAEVRKLITANKPAAADKSETVLAQFAFCIDVRSEPFRRALEKSGPFETYGTAGFFNMAIETCELGTKHSHSSLPVILKPQHRVEETAEELPFKSYQEHKKAAASLSSAFKTMKQNLLAGMLLPEVSGPWLSLQMAARSLVPRAAGQAFRNARKTWLKKPQTKLSLDRTETSEAGIPVGFTEEEKAAYARQALKMMGITDRFAPLVVICGHGSRSTNNPYASALDCGACGGASGAFNARVLAALCNLPSVRERLRSDGIFIPDDTVFAAAEHITTLDELHWLYVPELPAKAQQAFDRINSVLPDVSRTVGAERLEELPQLGYQNPRNEVERFAEDWSEIRPEWGLARNASFIIGTRRLTRGADLEGRAFLHSYDWRNDEDGSILSGIISGPGTVAQWINLQYYASTVAPHYYGSGNKATQTVTAGLGVMQGNASDLLAGLPWQSVMRSDDEIYHAPLRLLIVIEAPDDDIERLLDRDHSFRQKAENGWIHLASINPEGKWKNWTNTINE</sequence>
<comment type="function">
    <text evidence="1">Part of an energy-coupled inorganic carbon pump.</text>
</comment>
<comment type="cofactor">
    <cofactor evidence="1">
        <name>Zn(2+)</name>
        <dbReference type="ChEBI" id="CHEBI:29105"/>
    </cofactor>
</comment>
<comment type="subunit">
    <text evidence="1">Forms a complex with DabB.</text>
</comment>
<comment type="subcellular location">
    <subcellularLocation>
        <location evidence="1">Cell membrane</location>
        <topology evidence="1">Peripheral membrane protein</topology>
    </subcellularLocation>
</comment>
<comment type="similarity">
    <text evidence="1">Belongs to the inorganic carbon transporter (TC 9.A.2) DabA family.</text>
</comment>
<evidence type="ECO:0000255" key="1">
    <source>
        <dbReference type="HAMAP-Rule" id="MF_01871"/>
    </source>
</evidence>
<proteinExistence type="inferred from homology"/>
<feature type="chain" id="PRO_0000387247" description="Probable inorganic carbon transporter subunit DabA">
    <location>
        <begin position="1"/>
        <end position="873"/>
    </location>
</feature>
<feature type="binding site" evidence="1">
    <location>
        <position position="393"/>
    </location>
    <ligand>
        <name>Zn(2+)</name>
        <dbReference type="ChEBI" id="CHEBI:29105"/>
    </ligand>
</feature>
<feature type="binding site" evidence="1">
    <location>
        <position position="395"/>
    </location>
    <ligand>
        <name>Zn(2+)</name>
        <dbReference type="ChEBI" id="CHEBI:29105"/>
    </ligand>
</feature>
<feature type="binding site" evidence="1">
    <location>
        <position position="575"/>
    </location>
    <ligand>
        <name>Zn(2+)</name>
        <dbReference type="ChEBI" id="CHEBI:29105"/>
    </ligand>
</feature>
<feature type="binding site" evidence="1">
    <location>
        <position position="590"/>
    </location>
    <ligand>
        <name>Zn(2+)</name>
        <dbReference type="ChEBI" id="CHEBI:29105"/>
    </ligand>
</feature>
<organism>
    <name type="scientific">Bacillus licheniformis (strain ATCC 14580 / DSM 13 / JCM 2505 / CCUG 7422 / NBRC 12200 / NCIMB 9375 / NCTC 10341 / NRRL NRS-1264 / Gibson 46)</name>
    <dbReference type="NCBI Taxonomy" id="279010"/>
    <lineage>
        <taxon>Bacteria</taxon>
        <taxon>Bacillati</taxon>
        <taxon>Bacillota</taxon>
        <taxon>Bacilli</taxon>
        <taxon>Bacillales</taxon>
        <taxon>Bacillaceae</taxon>
        <taxon>Bacillus</taxon>
    </lineage>
</organism>